<protein>
    <recommendedName>
        <fullName evidence="1">Phosphoheptose isomerase</fullName>
        <ecNumber evidence="1">5.3.1.28</ecNumber>
    </recommendedName>
    <alternativeName>
        <fullName evidence="1">Sedoheptulose 7-phosphate isomerase</fullName>
    </alternativeName>
</protein>
<name>GMHA_COXBU</name>
<proteinExistence type="inferred from homology"/>
<dbReference type="EC" id="5.3.1.28" evidence="1"/>
<dbReference type="EMBL" id="AE016828">
    <property type="protein sequence ID" value="AAO91237.1"/>
    <property type="molecule type" value="Genomic_DNA"/>
</dbReference>
<dbReference type="RefSeq" id="NP_820723.1">
    <property type="nucleotide sequence ID" value="NC_002971.4"/>
</dbReference>
<dbReference type="RefSeq" id="WP_005770434.1">
    <property type="nucleotide sequence ID" value="NZ_CCYB01000005.1"/>
</dbReference>
<dbReference type="SMR" id="Q83AY4"/>
<dbReference type="STRING" id="227377.CBU_1743"/>
<dbReference type="DNASU" id="1209654"/>
<dbReference type="EnsemblBacteria" id="AAO91237">
    <property type="protein sequence ID" value="AAO91237"/>
    <property type="gene ID" value="CBU_1743"/>
</dbReference>
<dbReference type="GeneID" id="1209654"/>
<dbReference type="KEGG" id="cbu:CBU_1743"/>
<dbReference type="PATRIC" id="fig|227377.7.peg.1732"/>
<dbReference type="eggNOG" id="COG0279">
    <property type="taxonomic scope" value="Bacteria"/>
</dbReference>
<dbReference type="HOGENOM" id="CLU_080999_3_1_6"/>
<dbReference type="OrthoDB" id="9810929at2"/>
<dbReference type="UniPathway" id="UPA00041">
    <property type="reaction ID" value="UER00436"/>
</dbReference>
<dbReference type="Proteomes" id="UP000002671">
    <property type="component" value="Chromosome"/>
</dbReference>
<dbReference type="GO" id="GO:0005737">
    <property type="term" value="C:cytoplasm"/>
    <property type="evidence" value="ECO:0007669"/>
    <property type="project" value="UniProtKB-SubCell"/>
</dbReference>
<dbReference type="GO" id="GO:1990102">
    <property type="term" value="C:DnaA-DiaA complex"/>
    <property type="evidence" value="ECO:0000318"/>
    <property type="project" value="GO_Central"/>
</dbReference>
<dbReference type="GO" id="GO:0097367">
    <property type="term" value="F:carbohydrate derivative binding"/>
    <property type="evidence" value="ECO:0007669"/>
    <property type="project" value="InterPro"/>
</dbReference>
<dbReference type="GO" id="GO:0008968">
    <property type="term" value="F:D-sedoheptulose 7-phosphate isomerase activity"/>
    <property type="evidence" value="ECO:0007669"/>
    <property type="project" value="UniProtKB-UniRule"/>
</dbReference>
<dbReference type="GO" id="GO:0008270">
    <property type="term" value="F:zinc ion binding"/>
    <property type="evidence" value="ECO:0007669"/>
    <property type="project" value="UniProtKB-UniRule"/>
</dbReference>
<dbReference type="GO" id="GO:0005975">
    <property type="term" value="P:carbohydrate metabolic process"/>
    <property type="evidence" value="ECO:0007669"/>
    <property type="project" value="UniProtKB-UniRule"/>
</dbReference>
<dbReference type="GO" id="GO:2001061">
    <property type="term" value="P:D-glycero-D-manno-heptose 7-phosphate biosynthetic process"/>
    <property type="evidence" value="ECO:0007669"/>
    <property type="project" value="UniProtKB-UniPathway"/>
</dbReference>
<dbReference type="GO" id="GO:0032298">
    <property type="term" value="P:positive regulation of DNA-templated DNA replication initiation"/>
    <property type="evidence" value="ECO:0000318"/>
    <property type="project" value="GO_Central"/>
</dbReference>
<dbReference type="CDD" id="cd05006">
    <property type="entry name" value="SIS_GmhA"/>
    <property type="match status" value="1"/>
</dbReference>
<dbReference type="Gene3D" id="3.40.50.10490">
    <property type="entry name" value="Glucose-6-phosphate isomerase like protein, domain 1"/>
    <property type="match status" value="1"/>
</dbReference>
<dbReference type="HAMAP" id="MF_00067">
    <property type="entry name" value="GmhA"/>
    <property type="match status" value="1"/>
</dbReference>
<dbReference type="InterPro" id="IPR035461">
    <property type="entry name" value="GmhA/DiaA"/>
</dbReference>
<dbReference type="InterPro" id="IPR004515">
    <property type="entry name" value="Phosphoheptose_Isoase"/>
</dbReference>
<dbReference type="InterPro" id="IPR001347">
    <property type="entry name" value="SIS_dom"/>
</dbReference>
<dbReference type="InterPro" id="IPR046348">
    <property type="entry name" value="SIS_dom_sf"/>
</dbReference>
<dbReference type="InterPro" id="IPR050099">
    <property type="entry name" value="SIS_GmhA/DiaA_subfam"/>
</dbReference>
<dbReference type="NCBIfam" id="NF010546">
    <property type="entry name" value="PRK13936.1"/>
    <property type="match status" value="1"/>
</dbReference>
<dbReference type="PANTHER" id="PTHR30390:SF6">
    <property type="entry name" value="DNAA INITIATOR-ASSOCIATING PROTEIN DIAA"/>
    <property type="match status" value="1"/>
</dbReference>
<dbReference type="PANTHER" id="PTHR30390">
    <property type="entry name" value="SEDOHEPTULOSE 7-PHOSPHATE ISOMERASE / DNAA INITIATOR-ASSOCIATING FACTOR FOR REPLICATION INITIATION"/>
    <property type="match status" value="1"/>
</dbReference>
<dbReference type="Pfam" id="PF13580">
    <property type="entry name" value="SIS_2"/>
    <property type="match status" value="1"/>
</dbReference>
<dbReference type="SUPFAM" id="SSF53697">
    <property type="entry name" value="SIS domain"/>
    <property type="match status" value="1"/>
</dbReference>
<dbReference type="PROSITE" id="PS51464">
    <property type="entry name" value="SIS"/>
    <property type="match status" value="1"/>
</dbReference>
<sequence>MNLFQRVKYNFEESIKTKTAAIELLVDPIVQAGELMAQCLLNEHKILSCGNGGSAADAQHFSSEMLNRFETERPSFPALALTTDASTVTAIANDYSYAEVFSKQIAGLGSTGDILLAISTSGHSKNILQAITAAHIRGMNVVALTGRDGGELFTLLGTDDIEIRVPAESTARIQETHALIIHCLCDIIDRKLIPSSEDH</sequence>
<organism>
    <name type="scientific">Coxiella burnetii (strain RSA 493 / Nine Mile phase I)</name>
    <dbReference type="NCBI Taxonomy" id="227377"/>
    <lineage>
        <taxon>Bacteria</taxon>
        <taxon>Pseudomonadati</taxon>
        <taxon>Pseudomonadota</taxon>
        <taxon>Gammaproteobacteria</taxon>
        <taxon>Legionellales</taxon>
        <taxon>Coxiellaceae</taxon>
        <taxon>Coxiella</taxon>
    </lineage>
</organism>
<reference key="1">
    <citation type="journal article" date="2003" name="Proc. Natl. Acad. Sci. U.S.A.">
        <title>Complete genome sequence of the Q-fever pathogen, Coxiella burnetii.</title>
        <authorList>
            <person name="Seshadri R."/>
            <person name="Paulsen I.T."/>
            <person name="Eisen J.A."/>
            <person name="Read T.D."/>
            <person name="Nelson K.E."/>
            <person name="Nelson W.C."/>
            <person name="Ward N.L."/>
            <person name="Tettelin H."/>
            <person name="Davidsen T.M."/>
            <person name="Beanan M.J."/>
            <person name="DeBoy R.T."/>
            <person name="Daugherty S.C."/>
            <person name="Brinkac L.M."/>
            <person name="Madupu R."/>
            <person name="Dodson R.J."/>
            <person name="Khouri H.M."/>
            <person name="Lee K.H."/>
            <person name="Carty H.A."/>
            <person name="Scanlan D."/>
            <person name="Heinzen R.A."/>
            <person name="Thompson H.A."/>
            <person name="Samuel J.E."/>
            <person name="Fraser C.M."/>
            <person name="Heidelberg J.F."/>
        </authorList>
    </citation>
    <scope>NUCLEOTIDE SEQUENCE [LARGE SCALE GENOMIC DNA]</scope>
    <source>
        <strain>RSA 493 / Nine Mile phase I</strain>
    </source>
</reference>
<evidence type="ECO:0000255" key="1">
    <source>
        <dbReference type="HAMAP-Rule" id="MF_00067"/>
    </source>
</evidence>
<feature type="chain" id="PRO_1000009059" description="Phosphoheptose isomerase">
    <location>
        <begin position="1"/>
        <end position="199"/>
    </location>
</feature>
<feature type="domain" description="SIS" evidence="1">
    <location>
        <begin position="36"/>
        <end position="198"/>
    </location>
</feature>
<feature type="binding site" evidence="1">
    <location>
        <begin position="51"/>
        <end position="53"/>
    </location>
    <ligand>
        <name>substrate</name>
    </ligand>
</feature>
<feature type="binding site" evidence="1">
    <location>
        <position position="60"/>
    </location>
    <ligand>
        <name>Zn(2+)</name>
        <dbReference type="ChEBI" id="CHEBI:29105"/>
    </ligand>
</feature>
<feature type="binding site" evidence="1">
    <location>
        <position position="64"/>
    </location>
    <ligand>
        <name>substrate</name>
    </ligand>
</feature>
<feature type="binding site" evidence="1">
    <location>
        <position position="64"/>
    </location>
    <ligand>
        <name>Zn(2+)</name>
        <dbReference type="ChEBI" id="CHEBI:29105"/>
    </ligand>
</feature>
<feature type="binding site" evidence="1">
    <location>
        <begin position="93"/>
        <end position="94"/>
    </location>
    <ligand>
        <name>substrate</name>
    </ligand>
</feature>
<feature type="binding site" evidence="1">
    <location>
        <begin position="119"/>
        <end position="121"/>
    </location>
    <ligand>
        <name>substrate</name>
    </ligand>
</feature>
<feature type="binding site" evidence="1">
    <location>
        <position position="124"/>
    </location>
    <ligand>
        <name>substrate</name>
    </ligand>
</feature>
<feature type="binding site" evidence="1">
    <location>
        <position position="174"/>
    </location>
    <ligand>
        <name>substrate</name>
    </ligand>
</feature>
<feature type="binding site" evidence="1">
    <location>
        <position position="174"/>
    </location>
    <ligand>
        <name>Zn(2+)</name>
        <dbReference type="ChEBI" id="CHEBI:29105"/>
    </ligand>
</feature>
<feature type="binding site" evidence="1">
    <location>
        <position position="182"/>
    </location>
    <ligand>
        <name>Zn(2+)</name>
        <dbReference type="ChEBI" id="CHEBI:29105"/>
    </ligand>
</feature>
<comment type="function">
    <text evidence="1">Catalyzes the isomerization of sedoheptulose 7-phosphate in D-glycero-D-manno-heptose 7-phosphate.</text>
</comment>
<comment type="catalytic activity">
    <reaction evidence="1">
        <text>2 D-sedoheptulose 7-phosphate = D-glycero-alpha-D-manno-heptose 7-phosphate + D-glycero-beta-D-manno-heptose 7-phosphate</text>
        <dbReference type="Rhea" id="RHEA:27489"/>
        <dbReference type="ChEBI" id="CHEBI:57483"/>
        <dbReference type="ChEBI" id="CHEBI:60203"/>
        <dbReference type="ChEBI" id="CHEBI:60204"/>
        <dbReference type="EC" id="5.3.1.28"/>
    </reaction>
</comment>
<comment type="cofactor">
    <cofactor evidence="1">
        <name>Zn(2+)</name>
        <dbReference type="ChEBI" id="CHEBI:29105"/>
    </cofactor>
    <text evidence="1">Binds 1 zinc ion per subunit.</text>
</comment>
<comment type="pathway">
    <text evidence="1">Carbohydrate biosynthesis; D-glycero-D-manno-heptose 7-phosphate biosynthesis; D-glycero-alpha-D-manno-heptose 7-phosphate and D-glycero-beta-D-manno-heptose 7-phosphate from sedoheptulose 7-phosphate: step 1/1.</text>
</comment>
<comment type="subunit">
    <text evidence="1">Homotetramer.</text>
</comment>
<comment type="subcellular location">
    <subcellularLocation>
        <location evidence="1">Cytoplasm</location>
    </subcellularLocation>
</comment>
<comment type="miscellaneous">
    <text evidence="1">The reaction produces a racemic mixture of D-glycero-alpha-D-manno-heptose 7-phosphate and D-glycero-beta-D-manno-heptose 7-phosphate.</text>
</comment>
<comment type="similarity">
    <text evidence="1">Belongs to the SIS family. GmhA subfamily.</text>
</comment>
<keyword id="KW-0119">Carbohydrate metabolism</keyword>
<keyword id="KW-0963">Cytoplasm</keyword>
<keyword id="KW-0413">Isomerase</keyword>
<keyword id="KW-0479">Metal-binding</keyword>
<keyword id="KW-1185">Reference proteome</keyword>
<keyword id="KW-0862">Zinc</keyword>
<accession>Q83AY4</accession>
<gene>
    <name evidence="1" type="primary">gmhA</name>
    <name type="ordered locus">CBU_1743</name>
</gene>